<proteinExistence type="inferred from homology"/>
<gene>
    <name evidence="1" type="primary">smpB</name>
    <name type="ordered locus">XC_2771</name>
</gene>
<feature type="chain" id="PRO_1000002185" description="SsrA-binding protein">
    <location>
        <begin position="1"/>
        <end position="167"/>
    </location>
</feature>
<feature type="region of interest" description="Disordered" evidence="2">
    <location>
        <begin position="137"/>
        <end position="167"/>
    </location>
</feature>
<feature type="compositionally biased region" description="Basic and acidic residues" evidence="2">
    <location>
        <begin position="139"/>
        <end position="158"/>
    </location>
</feature>
<reference key="1">
    <citation type="journal article" date="2005" name="Genome Res.">
        <title>Comparative and functional genomic analyses of the pathogenicity of phytopathogen Xanthomonas campestris pv. campestris.</title>
        <authorList>
            <person name="Qian W."/>
            <person name="Jia Y."/>
            <person name="Ren S.-X."/>
            <person name="He Y.-Q."/>
            <person name="Feng J.-X."/>
            <person name="Lu L.-F."/>
            <person name="Sun Q."/>
            <person name="Ying G."/>
            <person name="Tang D.-J."/>
            <person name="Tang H."/>
            <person name="Wu W."/>
            <person name="Hao P."/>
            <person name="Wang L."/>
            <person name="Jiang B.-L."/>
            <person name="Zeng S."/>
            <person name="Gu W.-Y."/>
            <person name="Lu G."/>
            <person name="Rong L."/>
            <person name="Tian Y."/>
            <person name="Yao Z."/>
            <person name="Fu G."/>
            <person name="Chen B."/>
            <person name="Fang R."/>
            <person name="Qiang B."/>
            <person name="Chen Z."/>
            <person name="Zhao G.-P."/>
            <person name="Tang J.-L."/>
            <person name="He C."/>
        </authorList>
    </citation>
    <scope>NUCLEOTIDE SEQUENCE [LARGE SCALE GENOMIC DNA]</scope>
    <source>
        <strain>8004</strain>
    </source>
</reference>
<comment type="function">
    <text evidence="1">Required for rescue of stalled ribosomes mediated by trans-translation. Binds to transfer-messenger RNA (tmRNA), required for stable association of tmRNA with ribosomes. tmRNA and SmpB together mimic tRNA shape, replacing the anticodon stem-loop with SmpB. tmRNA is encoded by the ssrA gene; the 2 termini fold to resemble tRNA(Ala) and it encodes a 'tag peptide', a short internal open reading frame. During trans-translation Ala-aminoacylated tmRNA acts like a tRNA, entering the A-site of stalled ribosomes, displacing the stalled mRNA. The ribosome then switches to translate the ORF on the tmRNA; the nascent peptide is terminated with the 'tag peptide' encoded by the tmRNA and targeted for degradation. The ribosome is freed to recommence translation, which seems to be the essential function of trans-translation.</text>
</comment>
<comment type="subcellular location">
    <subcellularLocation>
        <location evidence="1">Cytoplasm</location>
    </subcellularLocation>
    <text evidence="1">The tmRNA-SmpB complex associates with stalled 70S ribosomes.</text>
</comment>
<comment type="similarity">
    <text evidence="1">Belongs to the SmpB family.</text>
</comment>
<protein>
    <recommendedName>
        <fullName evidence="1">SsrA-binding protein</fullName>
    </recommendedName>
    <alternativeName>
        <fullName evidence="1">Small protein B</fullName>
    </alternativeName>
</protein>
<sequence length="167" mass="19224">MSKKPAKDKAKSATATKTIALNKRARHEYHLEERYEAGLALQGWEVKAIRAGRANIVDGYAYVRSGEIYLIGAQITPLIQASTHVIPVERRDRKLLLHRAEIDKVLTRVEREGYTLVPTALYWSSNKVKLEIALAKGKQSHDKRDAAKERDWQRDKQRVMRRHNRDA</sequence>
<dbReference type="EMBL" id="CP000050">
    <property type="protein sequence ID" value="AAY49820.1"/>
    <property type="molecule type" value="Genomic_DNA"/>
</dbReference>
<dbReference type="RefSeq" id="WP_011036652.1">
    <property type="nucleotide sequence ID" value="NZ_CP155948.1"/>
</dbReference>
<dbReference type="SMR" id="Q4UT03"/>
<dbReference type="GeneID" id="58013949"/>
<dbReference type="KEGG" id="xcb:XC_2771"/>
<dbReference type="HOGENOM" id="CLU_108953_3_0_6"/>
<dbReference type="Proteomes" id="UP000000420">
    <property type="component" value="Chromosome"/>
</dbReference>
<dbReference type="GO" id="GO:0005829">
    <property type="term" value="C:cytosol"/>
    <property type="evidence" value="ECO:0007669"/>
    <property type="project" value="TreeGrafter"/>
</dbReference>
<dbReference type="GO" id="GO:0003723">
    <property type="term" value="F:RNA binding"/>
    <property type="evidence" value="ECO:0007669"/>
    <property type="project" value="UniProtKB-UniRule"/>
</dbReference>
<dbReference type="GO" id="GO:0070929">
    <property type="term" value="P:trans-translation"/>
    <property type="evidence" value="ECO:0007669"/>
    <property type="project" value="UniProtKB-UniRule"/>
</dbReference>
<dbReference type="CDD" id="cd09294">
    <property type="entry name" value="SmpB"/>
    <property type="match status" value="1"/>
</dbReference>
<dbReference type="Gene3D" id="2.40.280.10">
    <property type="match status" value="1"/>
</dbReference>
<dbReference type="HAMAP" id="MF_00023">
    <property type="entry name" value="SmpB"/>
    <property type="match status" value="1"/>
</dbReference>
<dbReference type="InterPro" id="IPR023620">
    <property type="entry name" value="SmpB"/>
</dbReference>
<dbReference type="InterPro" id="IPR000037">
    <property type="entry name" value="SsrA-bd_prot"/>
</dbReference>
<dbReference type="InterPro" id="IPR020081">
    <property type="entry name" value="SsrA-bd_prot_CS"/>
</dbReference>
<dbReference type="NCBIfam" id="NF003843">
    <property type="entry name" value="PRK05422.1"/>
    <property type="match status" value="1"/>
</dbReference>
<dbReference type="NCBIfam" id="TIGR00086">
    <property type="entry name" value="smpB"/>
    <property type="match status" value="1"/>
</dbReference>
<dbReference type="PANTHER" id="PTHR30308:SF2">
    <property type="entry name" value="SSRA-BINDING PROTEIN"/>
    <property type="match status" value="1"/>
</dbReference>
<dbReference type="PANTHER" id="PTHR30308">
    <property type="entry name" value="TMRNA-BINDING COMPONENT OF TRANS-TRANSLATION TAGGING COMPLEX"/>
    <property type="match status" value="1"/>
</dbReference>
<dbReference type="Pfam" id="PF01668">
    <property type="entry name" value="SmpB"/>
    <property type="match status" value="1"/>
</dbReference>
<dbReference type="SUPFAM" id="SSF74982">
    <property type="entry name" value="Small protein B (SmpB)"/>
    <property type="match status" value="1"/>
</dbReference>
<dbReference type="PROSITE" id="PS01317">
    <property type="entry name" value="SSRP"/>
    <property type="match status" value="1"/>
</dbReference>
<keyword id="KW-0963">Cytoplasm</keyword>
<keyword id="KW-0694">RNA-binding</keyword>
<organism>
    <name type="scientific">Xanthomonas campestris pv. campestris (strain 8004)</name>
    <dbReference type="NCBI Taxonomy" id="314565"/>
    <lineage>
        <taxon>Bacteria</taxon>
        <taxon>Pseudomonadati</taxon>
        <taxon>Pseudomonadota</taxon>
        <taxon>Gammaproteobacteria</taxon>
        <taxon>Lysobacterales</taxon>
        <taxon>Lysobacteraceae</taxon>
        <taxon>Xanthomonas</taxon>
    </lineage>
</organism>
<accession>Q4UT03</accession>
<name>SSRP_XANC8</name>
<evidence type="ECO:0000255" key="1">
    <source>
        <dbReference type="HAMAP-Rule" id="MF_00023"/>
    </source>
</evidence>
<evidence type="ECO:0000256" key="2">
    <source>
        <dbReference type="SAM" id="MobiDB-lite"/>
    </source>
</evidence>